<keyword id="KW-0027">Amidation</keyword>
<keyword id="KW-0903">Direct protein sequencing</keyword>
<keyword id="KW-0372">Hormone</keyword>
<keyword id="KW-0964">Secreted</keyword>
<name>PAHO_DIDVI</name>
<comment type="function">
    <text evidence="2">Hormone secreted by pancreatic cells that acts as a regulator of pancreatic and gastrointestinal functions probably by signaling through the G protein-coupled receptor NPY4R2.</text>
</comment>
<comment type="subcellular location">
    <subcellularLocation>
        <location evidence="2">Secreted</location>
    </subcellularLocation>
</comment>
<comment type="similarity">
    <text evidence="4">Belongs to the NPY family.</text>
</comment>
<proteinExistence type="evidence at protein level"/>
<accession>P18107</accession>
<protein>
    <recommendedName>
        <fullName evidence="3">Pancreatic polypeptide</fullName>
        <shortName evidence="3">PP</shortName>
    </recommendedName>
</protein>
<feature type="peptide" id="PRO_0000044796" description="Pancreatic polypeptide">
    <location>
        <begin position="1"/>
        <end position="36"/>
    </location>
</feature>
<feature type="modified residue" description="Tyrosine amide" evidence="1">
    <location>
        <position position="36"/>
    </location>
</feature>
<evidence type="ECO:0000250" key="1"/>
<evidence type="ECO:0000250" key="2">
    <source>
        <dbReference type="UniProtKB" id="P01298"/>
    </source>
</evidence>
<evidence type="ECO:0000303" key="3">
    <source>
    </source>
</evidence>
<evidence type="ECO:0000305" key="4"/>
<gene>
    <name type="primary">PPY</name>
</gene>
<organism>
    <name type="scientific">Didelphis virginiana</name>
    <name type="common">North American opossum</name>
    <name type="synonym">Didelphis marsupialis virginiana</name>
    <dbReference type="NCBI Taxonomy" id="9267"/>
    <lineage>
        <taxon>Eukaryota</taxon>
        <taxon>Metazoa</taxon>
        <taxon>Chordata</taxon>
        <taxon>Craniata</taxon>
        <taxon>Vertebrata</taxon>
        <taxon>Euteleostomi</taxon>
        <taxon>Mammalia</taxon>
        <taxon>Metatheria</taxon>
        <taxon>Didelphimorphia</taxon>
        <taxon>Didelphidae</taxon>
        <taxon>Didelphis</taxon>
    </lineage>
</organism>
<sequence>APQEPVYPGDDATPEQMAKYAAELRRYINRLTRPRY</sequence>
<dbReference type="PIR" id="JQ0365">
    <property type="entry name" value="JQ0365"/>
</dbReference>
<dbReference type="SMR" id="P18107"/>
<dbReference type="GO" id="GO:0005615">
    <property type="term" value="C:extracellular space"/>
    <property type="evidence" value="ECO:0007669"/>
    <property type="project" value="TreeGrafter"/>
</dbReference>
<dbReference type="GO" id="GO:0005184">
    <property type="term" value="F:neuropeptide hormone activity"/>
    <property type="evidence" value="ECO:0007669"/>
    <property type="project" value="TreeGrafter"/>
</dbReference>
<dbReference type="GO" id="GO:0031841">
    <property type="term" value="F:neuropeptide Y receptor binding"/>
    <property type="evidence" value="ECO:0007669"/>
    <property type="project" value="TreeGrafter"/>
</dbReference>
<dbReference type="GO" id="GO:0007631">
    <property type="term" value="P:feeding behavior"/>
    <property type="evidence" value="ECO:0007669"/>
    <property type="project" value="TreeGrafter"/>
</dbReference>
<dbReference type="GO" id="GO:0007218">
    <property type="term" value="P:neuropeptide signaling pathway"/>
    <property type="evidence" value="ECO:0007669"/>
    <property type="project" value="TreeGrafter"/>
</dbReference>
<dbReference type="CDD" id="cd00126">
    <property type="entry name" value="PAH"/>
    <property type="match status" value="1"/>
</dbReference>
<dbReference type="Gene3D" id="6.10.250.900">
    <property type="match status" value="1"/>
</dbReference>
<dbReference type="InterPro" id="IPR001955">
    <property type="entry name" value="Pancreatic_hormone-like"/>
</dbReference>
<dbReference type="InterPro" id="IPR020392">
    <property type="entry name" value="Pancreatic_hormone-like_CS"/>
</dbReference>
<dbReference type="PANTHER" id="PTHR10533">
    <property type="entry name" value="NEUROPEPTIDE Y/PANCREATIC HORMONE/PEPTIDE YY"/>
    <property type="match status" value="1"/>
</dbReference>
<dbReference type="PANTHER" id="PTHR10533:SF2">
    <property type="entry name" value="PANCREATIC POLYPEPTIDE PROHORMONE"/>
    <property type="match status" value="1"/>
</dbReference>
<dbReference type="Pfam" id="PF00159">
    <property type="entry name" value="Hormone_3"/>
    <property type="match status" value="1"/>
</dbReference>
<dbReference type="PRINTS" id="PR00278">
    <property type="entry name" value="PANCHORMONE"/>
</dbReference>
<dbReference type="SMART" id="SM00309">
    <property type="entry name" value="PAH"/>
    <property type="match status" value="1"/>
</dbReference>
<dbReference type="PROSITE" id="PS00265">
    <property type="entry name" value="PANCREATIC_HORMONE_1"/>
    <property type="match status" value="1"/>
</dbReference>
<dbReference type="PROSITE" id="PS50276">
    <property type="entry name" value="PANCREATIC_HORMONE_2"/>
    <property type="match status" value="1"/>
</dbReference>
<reference key="1">
    <citation type="journal article" date="1989" name="Peptides">
        <title>Opossum insulin, glucagon and pancreatic polypeptide: amino acid sequences.</title>
        <authorList>
            <person name="Yu J.-H."/>
            <person name="Eng J."/>
            <person name="Rattan S."/>
            <person name="Yalow R.S."/>
        </authorList>
    </citation>
    <scope>PROTEIN SEQUENCE</scope>
    <source>
        <tissue>Pancreas</tissue>
    </source>
</reference>